<protein>
    <recommendedName>
        <fullName>20 kDa chaperonin, chloroplastic</fullName>
    </recommendedName>
    <alternativeName>
        <fullName>Chaperonin 10</fullName>
        <shortName>Ch-CPN10</shortName>
        <shortName>Cpn10</shortName>
    </alternativeName>
    <alternativeName>
        <fullName>Protein Cpn21</fullName>
    </alternativeName>
</protein>
<comment type="function">
    <text>Seems to function only as a co-chaperone, along with cpn60, and in certain cases is essential for the discharge of biologically active proteins from cpn60.</text>
</comment>
<comment type="subunit">
    <text>Forms stable complexes with CPN60 in the presence of ATP.</text>
</comment>
<comment type="subcellular location">
    <subcellularLocation>
        <location>Plastid</location>
        <location>Chloroplast</location>
    </subcellularLocation>
</comment>
<comment type="similarity">
    <text evidence="1">Belongs to the GroES chaperonin family.</text>
</comment>
<proteinExistence type="evidence at protein level"/>
<feature type="chain" id="PRO_0000174925" description="20 kDa chaperonin, chloroplastic">
    <location>
        <begin position="1"/>
        <end position="21" status="greater than"/>
    </location>
</feature>
<feature type="non-terminal residue">
    <location>
        <position position="21"/>
    </location>
</feature>
<sequence>ATVVAPKYTAIKPLGDRVLVK</sequence>
<organism>
    <name type="scientific">Pisum sativum</name>
    <name type="common">Garden pea</name>
    <name type="synonym">Lathyrus oleraceus</name>
    <dbReference type="NCBI Taxonomy" id="3888"/>
    <lineage>
        <taxon>Eukaryota</taxon>
        <taxon>Viridiplantae</taxon>
        <taxon>Streptophyta</taxon>
        <taxon>Embryophyta</taxon>
        <taxon>Tracheophyta</taxon>
        <taxon>Spermatophyta</taxon>
        <taxon>Magnoliopsida</taxon>
        <taxon>eudicotyledons</taxon>
        <taxon>Gunneridae</taxon>
        <taxon>Pentapetalae</taxon>
        <taxon>rosids</taxon>
        <taxon>fabids</taxon>
        <taxon>Fabales</taxon>
        <taxon>Fabaceae</taxon>
        <taxon>Papilionoideae</taxon>
        <taxon>50 kb inversion clade</taxon>
        <taxon>NPAAA clade</taxon>
        <taxon>Hologalegina</taxon>
        <taxon>IRL clade</taxon>
        <taxon>Fabeae</taxon>
        <taxon>Pisum</taxon>
    </lineage>
</organism>
<gene>
    <name type="primary">CPN21</name>
    <name type="synonym">CHCPN10</name>
</gene>
<reference key="1">
    <citation type="journal article" date="1992" name="Proc. Natl. Acad. Sci. U.S.A.">
        <title>Identification, characterization, and DNA sequence of a functional 'double' groES-like chaperonin from chloroplasts of higher plants.</title>
        <authorList>
            <person name="Bertsch U."/>
            <person name="Soll J."/>
            <person name="Seetharam R."/>
            <person name="Viitanen P.V."/>
        </authorList>
    </citation>
    <scope>PROTEIN SEQUENCE</scope>
</reference>
<keyword id="KW-0143">Chaperone</keyword>
<keyword id="KW-0150">Chloroplast</keyword>
<keyword id="KW-0903">Direct protein sequencing</keyword>
<keyword id="KW-0934">Plastid</keyword>
<name>CH10C_PEA</name>
<dbReference type="GO" id="GO:0009507">
    <property type="term" value="C:chloroplast"/>
    <property type="evidence" value="ECO:0007669"/>
    <property type="project" value="UniProtKB-SubCell"/>
</dbReference>
<accession>P31233</accession>
<evidence type="ECO:0000305" key="1"/>